<organism>
    <name type="scientific">Escherichia coli O6:K15:H31 (strain 536 / UPEC)</name>
    <dbReference type="NCBI Taxonomy" id="362663"/>
    <lineage>
        <taxon>Bacteria</taxon>
        <taxon>Pseudomonadati</taxon>
        <taxon>Pseudomonadota</taxon>
        <taxon>Gammaproteobacteria</taxon>
        <taxon>Enterobacterales</taxon>
        <taxon>Enterobacteriaceae</taxon>
        <taxon>Escherichia</taxon>
    </lineage>
</organism>
<comment type="function">
    <text evidence="1">Catalyzes the reversible adenylation of nicotinate mononucleotide (NaMN) to nicotinic acid adenine dinucleotide (NaAD).</text>
</comment>
<comment type="catalytic activity">
    <reaction evidence="1">
        <text>nicotinate beta-D-ribonucleotide + ATP + H(+) = deamido-NAD(+) + diphosphate</text>
        <dbReference type="Rhea" id="RHEA:22860"/>
        <dbReference type="ChEBI" id="CHEBI:15378"/>
        <dbReference type="ChEBI" id="CHEBI:30616"/>
        <dbReference type="ChEBI" id="CHEBI:33019"/>
        <dbReference type="ChEBI" id="CHEBI:57502"/>
        <dbReference type="ChEBI" id="CHEBI:58437"/>
        <dbReference type="EC" id="2.7.7.18"/>
    </reaction>
</comment>
<comment type="pathway">
    <text evidence="1">Cofactor biosynthesis; NAD(+) biosynthesis; deamido-NAD(+) from nicotinate D-ribonucleotide: step 1/1.</text>
</comment>
<comment type="similarity">
    <text evidence="1">Belongs to the NadD family.</text>
</comment>
<gene>
    <name evidence="1" type="primary">nadD</name>
    <name type="ordered locus">ECP_0669</name>
</gene>
<sequence>MKSLQALFGGTFDPVHYGHLKPVETLANLIGLTRVTIIPNNVPPHRPQPEANSMQRKHMLELAIADKPLFTLDERELKRNAPSYTAQTLKEWRQEQGPDVPLAFIIGQDSLLTFPTWYEYETILDNAHLIVCRRPGYPLEMAQPQYQQWLEDHLTHNPEDLHLQPAGKIYLAETPWFNISATIIRERLQNGESCEDLLPEPVLTYINQQGLYR</sequence>
<proteinExistence type="inferred from homology"/>
<feature type="chain" id="PRO_0000310115" description="Probable nicotinate-nucleotide adenylyltransferase">
    <location>
        <begin position="1"/>
        <end position="213"/>
    </location>
</feature>
<reference key="1">
    <citation type="journal article" date="2006" name="Mol. Microbiol.">
        <title>Role of pathogenicity island-associated integrases in the genome plasticity of uropathogenic Escherichia coli strain 536.</title>
        <authorList>
            <person name="Hochhut B."/>
            <person name="Wilde C."/>
            <person name="Balling G."/>
            <person name="Middendorf B."/>
            <person name="Dobrindt U."/>
            <person name="Brzuszkiewicz E."/>
            <person name="Gottschalk G."/>
            <person name="Carniel E."/>
            <person name="Hacker J."/>
        </authorList>
    </citation>
    <scope>NUCLEOTIDE SEQUENCE [LARGE SCALE GENOMIC DNA]</scope>
    <source>
        <strain>536 / UPEC</strain>
    </source>
</reference>
<keyword id="KW-0067">ATP-binding</keyword>
<keyword id="KW-0520">NAD</keyword>
<keyword id="KW-0547">Nucleotide-binding</keyword>
<keyword id="KW-0548">Nucleotidyltransferase</keyword>
<keyword id="KW-0662">Pyridine nucleotide biosynthesis</keyword>
<keyword id="KW-0808">Transferase</keyword>
<name>NADD_ECOL5</name>
<protein>
    <recommendedName>
        <fullName evidence="1">Probable nicotinate-nucleotide adenylyltransferase</fullName>
        <ecNumber evidence="1">2.7.7.18</ecNumber>
    </recommendedName>
    <alternativeName>
        <fullName evidence="1">Deamido-NAD(+) diphosphorylase</fullName>
    </alternativeName>
    <alternativeName>
        <fullName evidence="1">Deamido-NAD(+) pyrophosphorylase</fullName>
    </alternativeName>
    <alternativeName>
        <fullName evidence="1">Nicotinate mononucleotide adenylyltransferase</fullName>
        <shortName evidence="1">NaMN adenylyltransferase</shortName>
    </alternativeName>
</protein>
<dbReference type="EC" id="2.7.7.18" evidence="1"/>
<dbReference type="EMBL" id="CP000247">
    <property type="protein sequence ID" value="ABG68697.1"/>
    <property type="molecule type" value="Genomic_DNA"/>
</dbReference>
<dbReference type="RefSeq" id="WP_000838881.1">
    <property type="nucleotide sequence ID" value="NC_008253.1"/>
</dbReference>
<dbReference type="SMR" id="Q0TK34"/>
<dbReference type="KEGG" id="ecp:ECP_0669"/>
<dbReference type="HOGENOM" id="CLU_069765_0_0_6"/>
<dbReference type="UniPathway" id="UPA00253">
    <property type="reaction ID" value="UER00332"/>
</dbReference>
<dbReference type="Proteomes" id="UP000009182">
    <property type="component" value="Chromosome"/>
</dbReference>
<dbReference type="GO" id="GO:0005524">
    <property type="term" value="F:ATP binding"/>
    <property type="evidence" value="ECO:0007669"/>
    <property type="project" value="UniProtKB-KW"/>
</dbReference>
<dbReference type="GO" id="GO:0004515">
    <property type="term" value="F:nicotinate-nucleotide adenylyltransferase activity"/>
    <property type="evidence" value="ECO:0007669"/>
    <property type="project" value="UniProtKB-UniRule"/>
</dbReference>
<dbReference type="GO" id="GO:0009435">
    <property type="term" value="P:NAD biosynthetic process"/>
    <property type="evidence" value="ECO:0007669"/>
    <property type="project" value="UniProtKB-UniRule"/>
</dbReference>
<dbReference type="CDD" id="cd02165">
    <property type="entry name" value="NMNAT"/>
    <property type="match status" value="1"/>
</dbReference>
<dbReference type="FunFam" id="3.40.50.620:FF:000039">
    <property type="entry name" value="Probable nicotinate-nucleotide adenylyltransferase"/>
    <property type="match status" value="1"/>
</dbReference>
<dbReference type="Gene3D" id="3.40.50.620">
    <property type="entry name" value="HUPs"/>
    <property type="match status" value="1"/>
</dbReference>
<dbReference type="HAMAP" id="MF_00244">
    <property type="entry name" value="NaMN_adenylyltr"/>
    <property type="match status" value="1"/>
</dbReference>
<dbReference type="InterPro" id="IPR004821">
    <property type="entry name" value="Cyt_trans-like"/>
</dbReference>
<dbReference type="InterPro" id="IPR005248">
    <property type="entry name" value="NadD/NMNAT"/>
</dbReference>
<dbReference type="InterPro" id="IPR014729">
    <property type="entry name" value="Rossmann-like_a/b/a_fold"/>
</dbReference>
<dbReference type="NCBIfam" id="TIGR00125">
    <property type="entry name" value="cyt_tran_rel"/>
    <property type="match status" value="1"/>
</dbReference>
<dbReference type="NCBIfam" id="TIGR00482">
    <property type="entry name" value="nicotinate (nicotinamide) nucleotide adenylyltransferase"/>
    <property type="match status" value="1"/>
</dbReference>
<dbReference type="NCBIfam" id="NF000839">
    <property type="entry name" value="PRK00071.1-1"/>
    <property type="match status" value="1"/>
</dbReference>
<dbReference type="NCBIfam" id="NF000840">
    <property type="entry name" value="PRK00071.1-3"/>
    <property type="match status" value="1"/>
</dbReference>
<dbReference type="PANTHER" id="PTHR39321">
    <property type="entry name" value="NICOTINATE-NUCLEOTIDE ADENYLYLTRANSFERASE-RELATED"/>
    <property type="match status" value="1"/>
</dbReference>
<dbReference type="PANTHER" id="PTHR39321:SF3">
    <property type="entry name" value="PHOSPHOPANTETHEINE ADENYLYLTRANSFERASE"/>
    <property type="match status" value="1"/>
</dbReference>
<dbReference type="Pfam" id="PF01467">
    <property type="entry name" value="CTP_transf_like"/>
    <property type="match status" value="1"/>
</dbReference>
<dbReference type="SUPFAM" id="SSF52374">
    <property type="entry name" value="Nucleotidylyl transferase"/>
    <property type="match status" value="1"/>
</dbReference>
<evidence type="ECO:0000255" key="1">
    <source>
        <dbReference type="HAMAP-Rule" id="MF_00244"/>
    </source>
</evidence>
<accession>Q0TK34</accession>